<dbReference type="EMBL" id="AE000783">
    <property type="protein sequence ID" value="AAC66511.1"/>
    <property type="molecule type" value="Genomic_DNA"/>
</dbReference>
<dbReference type="PIR" id="C70115">
    <property type="entry name" value="C70115"/>
</dbReference>
<dbReference type="RefSeq" id="NP_212257.1">
    <property type="nucleotide sequence ID" value="NC_001318.1"/>
</dbReference>
<dbReference type="RefSeq" id="WP_002658226.1">
    <property type="nucleotide sequence ID" value="NC_001318.1"/>
</dbReference>
<dbReference type="SMR" id="O51149"/>
<dbReference type="STRING" id="224326.BB_0123"/>
<dbReference type="PaxDb" id="224326-BB_0123"/>
<dbReference type="EnsemblBacteria" id="AAC66511">
    <property type="protein sequence ID" value="AAC66511"/>
    <property type="gene ID" value="BB_0123"/>
</dbReference>
<dbReference type="GeneID" id="56568095"/>
<dbReference type="KEGG" id="bbu:BB_0123"/>
<dbReference type="PATRIC" id="fig|224326.49.peg.521"/>
<dbReference type="HOGENOM" id="CLU_040318_1_3_12"/>
<dbReference type="OrthoDB" id="9808036at2"/>
<dbReference type="Proteomes" id="UP000001807">
    <property type="component" value="Chromosome"/>
</dbReference>
<dbReference type="GO" id="GO:0022627">
    <property type="term" value="C:cytosolic small ribosomal subunit"/>
    <property type="evidence" value="ECO:0007669"/>
    <property type="project" value="TreeGrafter"/>
</dbReference>
<dbReference type="GO" id="GO:0003735">
    <property type="term" value="F:structural constituent of ribosome"/>
    <property type="evidence" value="ECO:0007669"/>
    <property type="project" value="InterPro"/>
</dbReference>
<dbReference type="GO" id="GO:0006412">
    <property type="term" value="P:translation"/>
    <property type="evidence" value="ECO:0007669"/>
    <property type="project" value="UniProtKB-UniRule"/>
</dbReference>
<dbReference type="CDD" id="cd01425">
    <property type="entry name" value="RPS2"/>
    <property type="match status" value="1"/>
</dbReference>
<dbReference type="FunFam" id="1.10.287.610:FF:000001">
    <property type="entry name" value="30S ribosomal protein S2"/>
    <property type="match status" value="1"/>
</dbReference>
<dbReference type="Gene3D" id="3.40.50.10490">
    <property type="entry name" value="Glucose-6-phosphate isomerase like protein, domain 1"/>
    <property type="match status" value="1"/>
</dbReference>
<dbReference type="Gene3D" id="1.10.287.610">
    <property type="entry name" value="Helix hairpin bin"/>
    <property type="match status" value="1"/>
</dbReference>
<dbReference type="HAMAP" id="MF_00291_B">
    <property type="entry name" value="Ribosomal_uS2_B"/>
    <property type="match status" value="1"/>
</dbReference>
<dbReference type="InterPro" id="IPR001865">
    <property type="entry name" value="Ribosomal_uS2"/>
</dbReference>
<dbReference type="InterPro" id="IPR005706">
    <property type="entry name" value="Ribosomal_uS2_bac/mit/plastid"/>
</dbReference>
<dbReference type="InterPro" id="IPR018130">
    <property type="entry name" value="Ribosomal_uS2_CS"/>
</dbReference>
<dbReference type="InterPro" id="IPR023591">
    <property type="entry name" value="Ribosomal_uS2_flav_dom_sf"/>
</dbReference>
<dbReference type="NCBIfam" id="TIGR01011">
    <property type="entry name" value="rpsB_bact"/>
    <property type="match status" value="1"/>
</dbReference>
<dbReference type="PANTHER" id="PTHR12534">
    <property type="entry name" value="30S RIBOSOMAL PROTEIN S2 PROKARYOTIC AND ORGANELLAR"/>
    <property type="match status" value="1"/>
</dbReference>
<dbReference type="PANTHER" id="PTHR12534:SF0">
    <property type="entry name" value="SMALL RIBOSOMAL SUBUNIT PROTEIN US2M"/>
    <property type="match status" value="1"/>
</dbReference>
<dbReference type="Pfam" id="PF00318">
    <property type="entry name" value="Ribosomal_S2"/>
    <property type="match status" value="1"/>
</dbReference>
<dbReference type="PRINTS" id="PR00395">
    <property type="entry name" value="RIBOSOMALS2"/>
</dbReference>
<dbReference type="SUPFAM" id="SSF52313">
    <property type="entry name" value="Ribosomal protein S2"/>
    <property type="match status" value="1"/>
</dbReference>
<dbReference type="PROSITE" id="PS00962">
    <property type="entry name" value="RIBOSOMAL_S2_1"/>
    <property type="match status" value="1"/>
</dbReference>
<dbReference type="PROSITE" id="PS00963">
    <property type="entry name" value="RIBOSOMAL_S2_2"/>
    <property type="match status" value="1"/>
</dbReference>
<sequence length="260" mass="29676">MAIITMKSLLEAGVHFGHQVKRLDPRMKRFIFSERNEIHILDLQKTLQGIKDSYELVQRVIKDGKKVLFVGTKKQASEIIEQEARRSDMPYVNNRWLGGMLSNFNTIRKSVQKLKKLEKMEVDGTFDMISKKEISQLNREKSKLAKNLTGIKDMETLPGAIFIIDPKREQIAINEARKLKIPIISVVDTNCNPDVIDCPIPGNDDAIRSVALFTKIISDAILESDKEVGIQIIENLNEEDLMKEIEIKNDKSDSIEERGE</sequence>
<reference key="1">
    <citation type="journal article" date="1997" name="Nature">
        <title>Genomic sequence of a Lyme disease spirochaete, Borrelia burgdorferi.</title>
        <authorList>
            <person name="Fraser C.M."/>
            <person name="Casjens S."/>
            <person name="Huang W.M."/>
            <person name="Sutton G.G."/>
            <person name="Clayton R.A."/>
            <person name="Lathigra R."/>
            <person name="White O."/>
            <person name="Ketchum K.A."/>
            <person name="Dodson R.J."/>
            <person name="Hickey E.K."/>
            <person name="Gwinn M.L."/>
            <person name="Dougherty B.A."/>
            <person name="Tomb J.-F."/>
            <person name="Fleischmann R.D."/>
            <person name="Richardson D.L."/>
            <person name="Peterson J.D."/>
            <person name="Kerlavage A.R."/>
            <person name="Quackenbush J."/>
            <person name="Salzberg S.L."/>
            <person name="Hanson M."/>
            <person name="van Vugt R."/>
            <person name="Palmer N."/>
            <person name="Adams M.D."/>
            <person name="Gocayne J.D."/>
            <person name="Weidman J.F."/>
            <person name="Utterback T.R."/>
            <person name="Watthey L."/>
            <person name="McDonald L.A."/>
            <person name="Artiach P."/>
            <person name="Bowman C."/>
            <person name="Garland S.A."/>
            <person name="Fujii C."/>
            <person name="Cotton M.D."/>
            <person name="Horst K."/>
            <person name="Roberts K.M."/>
            <person name="Hatch B."/>
            <person name="Smith H.O."/>
            <person name="Venter J.C."/>
        </authorList>
    </citation>
    <scope>NUCLEOTIDE SEQUENCE [LARGE SCALE GENOMIC DNA]</scope>
    <source>
        <strain>ATCC 35210 / DSM 4680 / CIP 102532 / B31</strain>
    </source>
</reference>
<name>RS2_BORBU</name>
<evidence type="ECO:0000305" key="1"/>
<proteinExistence type="inferred from homology"/>
<comment type="similarity">
    <text evidence="1">Belongs to the universal ribosomal protein uS2 family.</text>
</comment>
<protein>
    <recommendedName>
        <fullName evidence="1">Small ribosomal subunit protein uS2</fullName>
    </recommendedName>
    <alternativeName>
        <fullName>30S ribosomal protein S2</fullName>
    </alternativeName>
</protein>
<accession>O51149</accession>
<keyword id="KW-1185">Reference proteome</keyword>
<keyword id="KW-0687">Ribonucleoprotein</keyword>
<keyword id="KW-0689">Ribosomal protein</keyword>
<organism>
    <name type="scientific">Borreliella burgdorferi (strain ATCC 35210 / DSM 4680 / CIP 102532 / B31)</name>
    <name type="common">Borrelia burgdorferi</name>
    <dbReference type="NCBI Taxonomy" id="224326"/>
    <lineage>
        <taxon>Bacteria</taxon>
        <taxon>Pseudomonadati</taxon>
        <taxon>Spirochaetota</taxon>
        <taxon>Spirochaetia</taxon>
        <taxon>Spirochaetales</taxon>
        <taxon>Borreliaceae</taxon>
        <taxon>Borreliella</taxon>
    </lineage>
</organism>
<gene>
    <name type="primary">rpsB</name>
    <name type="ordered locus">BB_0123</name>
</gene>
<feature type="chain" id="PRO_0000134136" description="Small ribosomal subunit protein uS2">
    <location>
        <begin position="1"/>
        <end position="260"/>
    </location>
</feature>